<gene>
    <name evidence="1" type="primary">fadA</name>
    <name type="ordered locus">PSEEN3727</name>
</gene>
<evidence type="ECO:0000255" key="1">
    <source>
        <dbReference type="HAMAP-Rule" id="MF_01620"/>
    </source>
</evidence>
<dbReference type="EC" id="2.3.1.16" evidence="1"/>
<dbReference type="EMBL" id="CT573326">
    <property type="protein sequence ID" value="CAK16447.1"/>
    <property type="molecule type" value="Genomic_DNA"/>
</dbReference>
<dbReference type="RefSeq" id="WP_011534824.1">
    <property type="nucleotide sequence ID" value="NC_008027.1"/>
</dbReference>
<dbReference type="SMR" id="Q1I7D5"/>
<dbReference type="STRING" id="384676.PSEEN3727"/>
<dbReference type="GeneID" id="32806771"/>
<dbReference type="KEGG" id="pen:PSEEN3727"/>
<dbReference type="eggNOG" id="COG0183">
    <property type="taxonomic scope" value="Bacteria"/>
</dbReference>
<dbReference type="HOGENOM" id="CLU_031026_2_3_6"/>
<dbReference type="OrthoDB" id="8951704at2"/>
<dbReference type="UniPathway" id="UPA00659"/>
<dbReference type="Proteomes" id="UP000000658">
    <property type="component" value="Chromosome"/>
</dbReference>
<dbReference type="GO" id="GO:0005737">
    <property type="term" value="C:cytoplasm"/>
    <property type="evidence" value="ECO:0007669"/>
    <property type="project" value="UniProtKB-SubCell"/>
</dbReference>
<dbReference type="GO" id="GO:0003988">
    <property type="term" value="F:acetyl-CoA C-acyltransferase activity"/>
    <property type="evidence" value="ECO:0007669"/>
    <property type="project" value="UniProtKB-UniRule"/>
</dbReference>
<dbReference type="GO" id="GO:0006635">
    <property type="term" value="P:fatty acid beta-oxidation"/>
    <property type="evidence" value="ECO:0007669"/>
    <property type="project" value="UniProtKB-UniRule"/>
</dbReference>
<dbReference type="GO" id="GO:0010124">
    <property type="term" value="P:phenylacetate catabolic process"/>
    <property type="evidence" value="ECO:0007669"/>
    <property type="project" value="TreeGrafter"/>
</dbReference>
<dbReference type="CDD" id="cd00751">
    <property type="entry name" value="thiolase"/>
    <property type="match status" value="1"/>
</dbReference>
<dbReference type="FunFam" id="3.40.47.10:FF:000010">
    <property type="entry name" value="Acetyl-CoA acetyltransferase (Thiolase)"/>
    <property type="match status" value="1"/>
</dbReference>
<dbReference type="Gene3D" id="3.40.47.10">
    <property type="match status" value="2"/>
</dbReference>
<dbReference type="HAMAP" id="MF_01620">
    <property type="entry name" value="FadA"/>
    <property type="match status" value="1"/>
</dbReference>
<dbReference type="InterPro" id="IPR012805">
    <property type="entry name" value="FadA"/>
</dbReference>
<dbReference type="InterPro" id="IPR002155">
    <property type="entry name" value="Thiolase"/>
</dbReference>
<dbReference type="InterPro" id="IPR016039">
    <property type="entry name" value="Thiolase-like"/>
</dbReference>
<dbReference type="InterPro" id="IPR050215">
    <property type="entry name" value="Thiolase-like_sf_Thiolase"/>
</dbReference>
<dbReference type="InterPro" id="IPR020615">
    <property type="entry name" value="Thiolase_acyl_enz_int_AS"/>
</dbReference>
<dbReference type="InterPro" id="IPR020617">
    <property type="entry name" value="Thiolase_C"/>
</dbReference>
<dbReference type="InterPro" id="IPR020613">
    <property type="entry name" value="Thiolase_CS"/>
</dbReference>
<dbReference type="InterPro" id="IPR020616">
    <property type="entry name" value="Thiolase_N"/>
</dbReference>
<dbReference type="NCBIfam" id="TIGR01930">
    <property type="entry name" value="AcCoA-C-Actrans"/>
    <property type="match status" value="1"/>
</dbReference>
<dbReference type="NCBIfam" id="TIGR02445">
    <property type="entry name" value="fadA"/>
    <property type="match status" value="1"/>
</dbReference>
<dbReference type="NCBIfam" id="NF006510">
    <property type="entry name" value="PRK08947.1"/>
    <property type="match status" value="1"/>
</dbReference>
<dbReference type="PANTHER" id="PTHR43853:SF11">
    <property type="entry name" value="3-KETOACYL-COA THIOLASE FADA"/>
    <property type="match status" value="1"/>
</dbReference>
<dbReference type="PANTHER" id="PTHR43853">
    <property type="entry name" value="3-KETOACYL-COA THIOLASE, PEROXISOMAL"/>
    <property type="match status" value="1"/>
</dbReference>
<dbReference type="Pfam" id="PF02803">
    <property type="entry name" value="Thiolase_C"/>
    <property type="match status" value="1"/>
</dbReference>
<dbReference type="Pfam" id="PF00108">
    <property type="entry name" value="Thiolase_N"/>
    <property type="match status" value="1"/>
</dbReference>
<dbReference type="PIRSF" id="PIRSF000429">
    <property type="entry name" value="Ac-CoA_Ac_transf"/>
    <property type="match status" value="1"/>
</dbReference>
<dbReference type="SUPFAM" id="SSF53901">
    <property type="entry name" value="Thiolase-like"/>
    <property type="match status" value="2"/>
</dbReference>
<dbReference type="PROSITE" id="PS00098">
    <property type="entry name" value="THIOLASE_1"/>
    <property type="match status" value="1"/>
</dbReference>
<dbReference type="PROSITE" id="PS00737">
    <property type="entry name" value="THIOLASE_2"/>
    <property type="match status" value="1"/>
</dbReference>
<reference key="1">
    <citation type="journal article" date="2006" name="Nat. Biotechnol.">
        <title>Complete genome sequence of the entomopathogenic and metabolically versatile soil bacterium Pseudomonas entomophila.</title>
        <authorList>
            <person name="Vodovar N."/>
            <person name="Vallenet D."/>
            <person name="Cruveiller S."/>
            <person name="Rouy Z."/>
            <person name="Barbe V."/>
            <person name="Acosta C."/>
            <person name="Cattolico L."/>
            <person name="Jubin C."/>
            <person name="Lajus A."/>
            <person name="Segurens B."/>
            <person name="Vacherie B."/>
            <person name="Wincker P."/>
            <person name="Weissenbach J."/>
            <person name="Lemaitre B."/>
            <person name="Medigue C."/>
            <person name="Boccard F."/>
        </authorList>
    </citation>
    <scope>NUCLEOTIDE SEQUENCE [LARGE SCALE GENOMIC DNA]</scope>
    <source>
        <strain>L48</strain>
    </source>
</reference>
<keyword id="KW-0012">Acyltransferase</keyword>
<keyword id="KW-0963">Cytoplasm</keyword>
<keyword id="KW-0276">Fatty acid metabolism</keyword>
<keyword id="KW-0442">Lipid degradation</keyword>
<keyword id="KW-0443">Lipid metabolism</keyword>
<keyword id="KW-0808">Transferase</keyword>
<accession>Q1I7D5</accession>
<sequence>MSLNPRDVVIVDFGRTPMGRSKGGMHRNTRAEDMSAHLISKLLERNDKIDPKEVEDVIWGCVNQTMEQGWNIARMASLMTPIPHTSAAQTVSRLCGSSMSALHTAAQAIMTGNGDVFVIGGVEHMGHVSMMHGVDPNPHLSLHAAKASGMMGLTAEMLGKMHGITREQQDLFGVRSHQLAHKATVEGKFKDEIIPMQGYDENGFLKVFDFDETIRPETTLEGLASLKPAFNPKGGTVTAGTSSQITDGASCMIVMSGQRAMDLGIQPLAVIRSMAVAGVDPAIMGYGPVPSTQKALKRAGLTMADIDFIELNEAFAAQALPVLKDLKVLDKMDEKVNLHGGAIALGHPFGCSGARISGTLLNVMKQNGGTLGVATMCVGLGQGITTVFERV</sequence>
<proteinExistence type="inferred from homology"/>
<name>FADA_PSEE4</name>
<protein>
    <recommendedName>
        <fullName evidence="1">3-ketoacyl-CoA thiolase</fullName>
        <ecNumber evidence="1">2.3.1.16</ecNumber>
    </recommendedName>
    <alternativeName>
        <fullName evidence="1">Acetyl-CoA acyltransferase</fullName>
    </alternativeName>
    <alternativeName>
        <fullName evidence="1">Beta-ketothiolase</fullName>
    </alternativeName>
    <alternativeName>
        <fullName evidence="1">Fatty acid oxidation complex subunit beta</fullName>
    </alternativeName>
</protein>
<organism>
    <name type="scientific">Pseudomonas entomophila (strain L48)</name>
    <dbReference type="NCBI Taxonomy" id="384676"/>
    <lineage>
        <taxon>Bacteria</taxon>
        <taxon>Pseudomonadati</taxon>
        <taxon>Pseudomonadota</taxon>
        <taxon>Gammaproteobacteria</taxon>
        <taxon>Pseudomonadales</taxon>
        <taxon>Pseudomonadaceae</taxon>
        <taxon>Pseudomonas</taxon>
    </lineage>
</organism>
<comment type="function">
    <text evidence="1">Catalyzes the final step of fatty acid oxidation in which acetyl-CoA is released and the CoA ester of a fatty acid two carbons shorter is formed.</text>
</comment>
<comment type="catalytic activity">
    <reaction evidence="1">
        <text>an acyl-CoA + acetyl-CoA = a 3-oxoacyl-CoA + CoA</text>
        <dbReference type="Rhea" id="RHEA:21564"/>
        <dbReference type="ChEBI" id="CHEBI:57287"/>
        <dbReference type="ChEBI" id="CHEBI:57288"/>
        <dbReference type="ChEBI" id="CHEBI:58342"/>
        <dbReference type="ChEBI" id="CHEBI:90726"/>
        <dbReference type="EC" id="2.3.1.16"/>
    </reaction>
</comment>
<comment type="pathway">
    <text evidence="1">Lipid metabolism; fatty acid beta-oxidation.</text>
</comment>
<comment type="subunit">
    <text evidence="1">Heterotetramer of two alpha chains (FadB) and two beta chains (FadA).</text>
</comment>
<comment type="subcellular location">
    <subcellularLocation>
        <location evidence="1">Cytoplasm</location>
    </subcellularLocation>
</comment>
<comment type="similarity">
    <text evidence="1">Belongs to the thiolase-like superfamily. Thiolase family.</text>
</comment>
<feature type="chain" id="PRO_0000292896" description="3-ketoacyl-CoA thiolase">
    <location>
        <begin position="1"/>
        <end position="391"/>
    </location>
</feature>
<feature type="active site" description="Acyl-thioester intermediate" evidence="1">
    <location>
        <position position="95"/>
    </location>
</feature>
<feature type="active site" description="Proton acceptor" evidence="1">
    <location>
        <position position="347"/>
    </location>
</feature>
<feature type="active site" description="Proton acceptor" evidence="1">
    <location>
        <position position="377"/>
    </location>
</feature>